<name>TOD1_ARATH</name>
<protein>
    <recommendedName>
        <fullName evidence="5">Alkaline ceramidase TOD1</fullName>
        <ecNumber evidence="3">3.5.1.23</ecNumber>
    </recommendedName>
    <alternativeName>
        <fullName evidence="4">Protein TURGOR REGULATION DEFECT 1</fullName>
    </alternativeName>
</protein>
<accession>Q6DBD7</accession>
<accession>Q9FL38</accession>
<organism>
    <name type="scientific">Arabidopsis thaliana</name>
    <name type="common">Mouse-ear cress</name>
    <dbReference type="NCBI Taxonomy" id="3702"/>
    <lineage>
        <taxon>Eukaryota</taxon>
        <taxon>Viridiplantae</taxon>
        <taxon>Streptophyta</taxon>
        <taxon>Embryophyta</taxon>
        <taxon>Tracheophyta</taxon>
        <taxon>Spermatophyta</taxon>
        <taxon>Magnoliopsida</taxon>
        <taxon>eudicotyledons</taxon>
        <taxon>Gunneridae</taxon>
        <taxon>Pentapetalae</taxon>
        <taxon>rosids</taxon>
        <taxon>malvids</taxon>
        <taxon>Brassicales</taxon>
        <taxon>Brassicaceae</taxon>
        <taxon>Camelineae</taxon>
        <taxon>Arabidopsis</taxon>
    </lineage>
</organism>
<comment type="function">
    <text evidence="3">Endoplasmic reticulum ceramidase that catalyzes the hydrolysis of ceramides into sphingosine and free fatty acids at alkaline pH (e.g. pH 9.5) (PubMed:25591940). Inactive on phytoceramide (PubMed:25591940). Involved in the regulation of turgor pressure in guard cells and pollen tubes (PubMed:25591940).</text>
</comment>
<comment type="catalytic activity">
    <reaction evidence="3">
        <text>an N-acylsphing-4-enine + H2O = sphing-4-enine + a fatty acid</text>
        <dbReference type="Rhea" id="RHEA:20856"/>
        <dbReference type="ChEBI" id="CHEBI:15377"/>
        <dbReference type="ChEBI" id="CHEBI:28868"/>
        <dbReference type="ChEBI" id="CHEBI:52639"/>
        <dbReference type="ChEBI" id="CHEBI:57756"/>
        <dbReference type="EC" id="3.5.1.23"/>
    </reaction>
    <physiologicalReaction direction="right-to-left" evidence="6">
        <dbReference type="Rhea" id="RHEA:20858"/>
    </physiologicalReaction>
</comment>
<comment type="pathway">
    <text evidence="3">Lipid metabolism.</text>
</comment>
<comment type="subcellular location">
    <subcellularLocation>
        <location evidence="3">Golgi apparatus membrane</location>
        <topology evidence="1">Single-pass membrane protein</topology>
    </subcellularLocation>
</comment>
<comment type="tissue specificity">
    <text evidence="3">Preferentially expressed in pollen grains, pollen tubes and silique guard cells, but barely detectable in roots, stems and leaves.</text>
</comment>
<comment type="disruption phenotype">
    <text evidence="3">Increased turgor in pollen tubes associated with altered and delayed pollen tubes growth (PubMed:25591940). Short siliques resulting from severe sterility (PubMed:25591940). Insensitivity to abscisic acid (ABA)-induced stomatal closure in guard cells (PubMed:25591940). These phenotypes are partially restored by the disruption of GAUT13 (PubMed:25591940).</text>
</comment>
<comment type="similarity">
    <text evidence="5">Belongs to the alkaline ceramidase family.</text>
</comment>
<comment type="sequence caution" evidence="5">
    <conflict type="erroneous gene model prediction">
        <sequence resource="EMBL-CDS" id="BAB11077"/>
    </conflict>
</comment>
<keyword id="KW-0938">Abscisic acid signaling pathway</keyword>
<keyword id="KW-0325">Glycoprotein</keyword>
<keyword id="KW-0333">Golgi apparatus</keyword>
<keyword id="KW-0378">Hydrolase</keyword>
<keyword id="KW-0443">Lipid metabolism</keyword>
<keyword id="KW-0472">Membrane</keyword>
<keyword id="KW-1185">Reference proteome</keyword>
<keyword id="KW-0808">Transferase</keyword>
<keyword id="KW-0812">Transmembrane</keyword>
<keyword id="KW-1133">Transmembrane helix</keyword>
<gene>
    <name evidence="4" type="primary">TOD1</name>
    <name evidence="7" type="ordered locus">At5g46220</name>
    <name evidence="8" type="ORF">MDE13.4</name>
</gene>
<sequence length="462" mass="53882">MGKFITTTLSPPLYARSKLLCFSLLYLFSTIFLFLYVSLSRNQCIFRYSPFDPIQAKLFSYPSSYGEHKYALPTHRSSCSSPIFFSDYWTVLKEIQSILSGSSPKENLRYINGKSESFGGNFSTQKRFSYFNHSNIDVEVPCGFFRDFPVSNSDRVEMEKCGLVVASAIFNDHDKIRQPVGLGVKTLETVCFYMFIDDKTLNSLFHHNVILKNNPSDYRVGAWRIIKISKSENLYLNPAMNGVIPKYLIHRLFPNSKFSIWVDAKIQLMIDPLLLIHSMLVVPEVDMAISKHPFFVNTMEEAMATARWKKWGDVDGLRIQMETYCEHGLKPWSSSKLPYPTDVPDTALILRRHGIRSNLFSCFMFNELEAFNPRDQLAFAFVRDHINPKVKMNMFEVEVFEQVVVEYRHNLKKIESSTYEEQEEEQKQESLRTIQKRRKWLDHESWSLNRSSCKNYLTDMWG</sequence>
<dbReference type="EC" id="3.5.1.23" evidence="3"/>
<dbReference type="EMBL" id="AB010698">
    <property type="protein sequence ID" value="BAB11077.1"/>
    <property type="status" value="ALT_SEQ"/>
    <property type="molecule type" value="Genomic_DNA"/>
</dbReference>
<dbReference type="EMBL" id="AB025620">
    <property type="protein sequence ID" value="BAB11077.1"/>
    <property type="status" value="JOINED"/>
    <property type="molecule type" value="Genomic_DNA"/>
</dbReference>
<dbReference type="EMBL" id="CP002688">
    <property type="protein sequence ID" value="AED95354.1"/>
    <property type="molecule type" value="Genomic_DNA"/>
</dbReference>
<dbReference type="EMBL" id="BT015085">
    <property type="protein sequence ID" value="AAT71957.1"/>
    <property type="molecule type" value="mRNA"/>
</dbReference>
<dbReference type="EMBL" id="BT020346">
    <property type="protein sequence ID" value="AAV85701.1"/>
    <property type="molecule type" value="mRNA"/>
</dbReference>
<dbReference type="EMBL" id="KY906089">
    <property type="protein sequence ID" value="ARJ31453.1"/>
    <property type="molecule type" value="mRNA"/>
</dbReference>
<dbReference type="RefSeq" id="NP_199434.2">
    <property type="nucleotide sequence ID" value="NM_123991.4"/>
</dbReference>
<dbReference type="FunCoup" id="Q6DBD7">
    <property type="interactions" value="58"/>
</dbReference>
<dbReference type="STRING" id="3702.Q6DBD7"/>
<dbReference type="GlyGen" id="Q6DBD7">
    <property type="glycosylation" value="3 sites"/>
</dbReference>
<dbReference type="PaxDb" id="3702-AT5G46220.1"/>
<dbReference type="ProteomicsDB" id="175658"/>
<dbReference type="EnsemblPlants" id="AT5G46220.1">
    <property type="protein sequence ID" value="AT5G46220.1"/>
    <property type="gene ID" value="AT5G46220"/>
</dbReference>
<dbReference type="GeneID" id="834664"/>
<dbReference type="Gramene" id="AT5G46220.1">
    <property type="protein sequence ID" value="AT5G46220.1"/>
    <property type="gene ID" value="AT5G46220"/>
</dbReference>
<dbReference type="KEGG" id="ath:AT5G46220"/>
<dbReference type="Araport" id="AT5G46220"/>
<dbReference type="TAIR" id="AT5G46220">
    <property type="gene designation" value="TOD1"/>
</dbReference>
<dbReference type="eggNOG" id="ENOG502QQFZ">
    <property type="taxonomic scope" value="Eukaryota"/>
</dbReference>
<dbReference type="HOGENOM" id="CLU_047191_0_0_1"/>
<dbReference type="InParanoid" id="Q6DBD7"/>
<dbReference type="OMA" id="YWTVLKE"/>
<dbReference type="BRENDA" id="3.5.1.23">
    <property type="organism ID" value="399"/>
</dbReference>
<dbReference type="PRO" id="PR:Q6DBD7"/>
<dbReference type="Proteomes" id="UP000006548">
    <property type="component" value="Chromosome 5"/>
</dbReference>
<dbReference type="ExpressionAtlas" id="Q6DBD7">
    <property type="expression patterns" value="baseline and differential"/>
</dbReference>
<dbReference type="GO" id="GO:0005794">
    <property type="term" value="C:Golgi apparatus"/>
    <property type="evidence" value="ECO:0000314"/>
    <property type="project" value="TAIR"/>
</dbReference>
<dbReference type="GO" id="GO:0000139">
    <property type="term" value="C:Golgi membrane"/>
    <property type="evidence" value="ECO:0007669"/>
    <property type="project" value="UniProtKB-SubCell"/>
</dbReference>
<dbReference type="GO" id="GO:0090406">
    <property type="term" value="C:pollen tube"/>
    <property type="evidence" value="ECO:0000314"/>
    <property type="project" value="TAIR"/>
</dbReference>
<dbReference type="GO" id="GO:0016787">
    <property type="term" value="F:hydrolase activity"/>
    <property type="evidence" value="ECO:0007669"/>
    <property type="project" value="UniProtKB-KW"/>
</dbReference>
<dbReference type="GO" id="GO:0016740">
    <property type="term" value="F:transferase activity"/>
    <property type="evidence" value="ECO:0007669"/>
    <property type="project" value="UniProtKB-KW"/>
</dbReference>
<dbReference type="GO" id="GO:0009738">
    <property type="term" value="P:abscisic acid-activated signaling pathway"/>
    <property type="evidence" value="ECO:0007669"/>
    <property type="project" value="UniProtKB-KW"/>
</dbReference>
<dbReference type="GO" id="GO:0009992">
    <property type="term" value="P:intracellular water homeostasis"/>
    <property type="evidence" value="ECO:0000315"/>
    <property type="project" value="UniProtKB"/>
</dbReference>
<dbReference type="GO" id="GO:0006629">
    <property type="term" value="P:lipid metabolic process"/>
    <property type="evidence" value="ECO:0007669"/>
    <property type="project" value="UniProtKB-KW"/>
</dbReference>
<dbReference type="GO" id="GO:0009860">
    <property type="term" value="P:pollen tube growth"/>
    <property type="evidence" value="ECO:0000315"/>
    <property type="project" value="TAIR"/>
</dbReference>
<dbReference type="GO" id="GO:1902456">
    <property type="term" value="P:regulation of stomatal opening"/>
    <property type="evidence" value="ECO:0000315"/>
    <property type="project" value="TAIR"/>
</dbReference>
<dbReference type="GO" id="GO:0009737">
    <property type="term" value="P:response to abscisic acid"/>
    <property type="evidence" value="ECO:0000315"/>
    <property type="project" value="UniProtKB"/>
</dbReference>
<dbReference type="GO" id="GO:0010118">
    <property type="term" value="P:stomatal movement"/>
    <property type="evidence" value="ECO:0000315"/>
    <property type="project" value="TAIR"/>
</dbReference>
<dbReference type="InterPro" id="IPR006852">
    <property type="entry name" value="TOD1_MUCI70"/>
</dbReference>
<dbReference type="InterPro" id="IPR048354">
    <property type="entry name" value="TOD1_MUCI70_glycTrfase_dom"/>
</dbReference>
<dbReference type="PANTHER" id="PTHR12956:SF13">
    <property type="entry name" value="ALKALINE CERAMIDASE TOD1"/>
    <property type="match status" value="1"/>
</dbReference>
<dbReference type="PANTHER" id="PTHR12956">
    <property type="entry name" value="ALKALINE CERAMIDASE-RELATED"/>
    <property type="match status" value="1"/>
</dbReference>
<dbReference type="Pfam" id="PF04765">
    <property type="entry name" value="TOD1_MUCI70"/>
    <property type="match status" value="1"/>
</dbReference>
<proteinExistence type="evidence at protein level"/>
<feature type="chain" id="PRO_0000456955" description="Alkaline ceramidase TOD1">
    <location>
        <begin position="1"/>
        <end position="462"/>
    </location>
</feature>
<feature type="topological domain" description="Cytoplasmic" evidence="5">
    <location>
        <begin position="1"/>
        <end position="18"/>
    </location>
</feature>
<feature type="transmembrane region" description="Helical" evidence="1">
    <location>
        <begin position="19"/>
        <end position="39"/>
    </location>
</feature>
<feature type="topological domain" description="Lumenal" evidence="5">
    <location>
        <begin position="40"/>
        <end position="462"/>
    </location>
</feature>
<feature type="glycosylation site" description="N-linked (GlcNAc...) asparagine" evidence="2">
    <location>
        <position position="121"/>
    </location>
</feature>
<feature type="glycosylation site" description="N-linked (GlcNAc...) asparagine" evidence="2">
    <location>
        <position position="132"/>
    </location>
</feature>
<feature type="glycosylation site" description="N-linked (GlcNAc...) asparagine" evidence="2">
    <location>
        <position position="449"/>
    </location>
</feature>
<evidence type="ECO:0000255" key="1"/>
<evidence type="ECO:0000255" key="2">
    <source>
        <dbReference type="PROSITE-ProRule" id="PRU00498"/>
    </source>
</evidence>
<evidence type="ECO:0000269" key="3">
    <source>
    </source>
</evidence>
<evidence type="ECO:0000303" key="4">
    <source>
    </source>
</evidence>
<evidence type="ECO:0000305" key="5"/>
<evidence type="ECO:0000305" key="6">
    <source>
    </source>
</evidence>
<evidence type="ECO:0000312" key="7">
    <source>
        <dbReference type="Araport" id="AT5G46220"/>
    </source>
</evidence>
<evidence type="ECO:0000312" key="8">
    <source>
        <dbReference type="EMBL" id="BAB11077.1"/>
    </source>
</evidence>
<reference key="1">
    <citation type="journal article" date="1998" name="DNA Res.">
        <title>Structural analysis of Arabidopsis thaliana chromosome 5. V. Sequence features of the regions of 1,381,565 bp covered by twenty one physically assigned P1 and TAC clones.</title>
        <authorList>
            <person name="Kaneko T."/>
            <person name="Kotani H."/>
            <person name="Nakamura Y."/>
            <person name="Sato S."/>
            <person name="Asamizu E."/>
            <person name="Miyajima N."/>
            <person name="Tabata S."/>
        </authorList>
    </citation>
    <scope>NUCLEOTIDE SEQUENCE [LARGE SCALE GENOMIC DNA]</scope>
    <source>
        <strain>cv. Columbia</strain>
    </source>
</reference>
<reference key="2">
    <citation type="submission" date="1999-04" db="EMBL/GenBank/DDBJ databases">
        <title>Structural analysis of Arabidopsis thaliana chromosome 5. XI.</title>
        <authorList>
            <person name="Kaneko T."/>
            <person name="Katoh T."/>
            <person name="Asamizu E."/>
            <person name="Sato S."/>
            <person name="Nakamura Y."/>
            <person name="Kotani H."/>
            <person name="Tabata S."/>
        </authorList>
    </citation>
    <scope>NUCLEOTIDE SEQUENCE [LARGE SCALE GENOMIC DNA]</scope>
    <source>
        <strain>cv. Columbia</strain>
    </source>
</reference>
<reference key="3">
    <citation type="journal article" date="2017" name="Plant J.">
        <title>Araport11: a complete reannotation of the Arabidopsis thaliana reference genome.</title>
        <authorList>
            <person name="Cheng C.Y."/>
            <person name="Krishnakumar V."/>
            <person name="Chan A.P."/>
            <person name="Thibaud-Nissen F."/>
            <person name="Schobel S."/>
            <person name="Town C.D."/>
        </authorList>
    </citation>
    <scope>GENOME REANNOTATION</scope>
    <source>
        <strain>cv. Columbia</strain>
    </source>
</reference>
<reference key="4">
    <citation type="submission" date="2004-07" db="EMBL/GenBank/DDBJ databases">
        <title>Arabidopsis ORF clones.</title>
        <authorList>
            <person name="Cheuk R.F."/>
            <person name="Chen H."/>
            <person name="Kim C.J."/>
            <person name="Shinn P."/>
            <person name="Ecker J.R."/>
        </authorList>
    </citation>
    <scope>NUCLEOTIDE SEQUENCE [LARGE SCALE MRNA]</scope>
    <source>
        <strain>cv. Columbia</strain>
    </source>
</reference>
<reference key="5">
    <citation type="submission" date="2017-04" db="EMBL/GenBank/DDBJ databases">
        <title>Arabidopsis glycosyltransfereases: an update.</title>
        <authorList>
            <person name="Zeng W."/>
            <person name="Gluza P."/>
            <person name="Heazlewood J."/>
        </authorList>
    </citation>
    <scope>NUCLEOTIDE SEQUENCE [LARGE SCALE MRNA]</scope>
    <source>
        <strain>cv. Columbia</strain>
    </source>
</reference>
<reference key="6">
    <citation type="journal article" date="2015" name="Nat. Commun.">
        <title>The Arabidopsis alkaline ceramidase TOD1 is a key turgor pressure regulator in plant cells.</title>
        <authorList>
            <person name="Chen L.-Y."/>
            <person name="Shi D.-Q."/>
            <person name="Zhang W.-J."/>
            <person name="Tang Z.-S."/>
            <person name="Liu J."/>
            <person name="Yang W.-C."/>
        </authorList>
    </citation>
    <scope>FUNCTION</scope>
    <scope>DISRUPTION PHENOTYPE</scope>
    <scope>CATALYTIC ACTIVITY</scope>
    <scope>SUBCELLULAR LOCATION</scope>
    <scope>TISSUE SPECIFICITY</scope>
    <scope>PATHWAY</scope>
    <source>
        <strain>cv. Landsberg erecta</strain>
    </source>
</reference>